<comment type="function">
    <text evidence="1">Catalyzes the oxidative demethylation of N-methyl-L-tryptophan.</text>
</comment>
<comment type="catalytic activity">
    <reaction evidence="1">
        <text>N(alpha)-methyl-L-tryptophan + O2 + H2O = L-tryptophan + formaldehyde + H2O2</text>
        <dbReference type="Rhea" id="RHEA:28006"/>
        <dbReference type="ChEBI" id="CHEBI:15377"/>
        <dbReference type="ChEBI" id="CHEBI:15379"/>
        <dbReference type="ChEBI" id="CHEBI:16240"/>
        <dbReference type="ChEBI" id="CHEBI:16842"/>
        <dbReference type="ChEBI" id="CHEBI:57283"/>
        <dbReference type="ChEBI" id="CHEBI:57912"/>
    </reaction>
</comment>
<comment type="cofactor">
    <cofactor evidence="1">
        <name>FAD</name>
        <dbReference type="ChEBI" id="CHEBI:57692"/>
    </cofactor>
    <text evidence="1">Binds 1 FAD per subunit.</text>
</comment>
<comment type="subunit">
    <text evidence="1">Monomer.</text>
</comment>
<comment type="similarity">
    <text evidence="1">Belongs to the MSOX/MTOX family. MTOX subfamily.</text>
</comment>
<reference key="1">
    <citation type="journal article" date="2005" name="Nucleic Acids Res.">
        <title>Genome dynamics and diversity of Shigella species, the etiologic agents of bacillary dysentery.</title>
        <authorList>
            <person name="Yang F."/>
            <person name="Yang J."/>
            <person name="Zhang X."/>
            <person name="Chen L."/>
            <person name="Jiang Y."/>
            <person name="Yan Y."/>
            <person name="Tang X."/>
            <person name="Wang J."/>
            <person name="Xiong Z."/>
            <person name="Dong J."/>
            <person name="Xue Y."/>
            <person name="Zhu Y."/>
            <person name="Xu X."/>
            <person name="Sun L."/>
            <person name="Chen S."/>
            <person name="Nie H."/>
            <person name="Peng J."/>
            <person name="Xu J."/>
            <person name="Wang Y."/>
            <person name="Yuan Z."/>
            <person name="Wen Y."/>
            <person name="Yao Z."/>
            <person name="Shen Y."/>
            <person name="Qiang B."/>
            <person name="Hou Y."/>
            <person name="Yu J."/>
            <person name="Jin Q."/>
        </authorList>
    </citation>
    <scope>NUCLEOTIDE SEQUENCE [LARGE SCALE GENOMIC DNA]</scope>
    <source>
        <strain>Ss046</strain>
    </source>
</reference>
<keyword id="KW-0274">FAD</keyword>
<keyword id="KW-0285">Flavoprotein</keyword>
<keyword id="KW-0560">Oxidoreductase</keyword>
<keyword id="KW-1185">Reference proteome</keyword>
<organism>
    <name type="scientific">Shigella sonnei (strain Ss046)</name>
    <dbReference type="NCBI Taxonomy" id="300269"/>
    <lineage>
        <taxon>Bacteria</taxon>
        <taxon>Pseudomonadati</taxon>
        <taxon>Pseudomonadota</taxon>
        <taxon>Gammaproteobacteria</taxon>
        <taxon>Enterobacterales</taxon>
        <taxon>Enterobacteriaceae</taxon>
        <taxon>Shigella</taxon>
    </lineage>
</organism>
<gene>
    <name evidence="1" type="primary">solA</name>
    <name type="ordered locus">SSON_1079</name>
</gene>
<dbReference type="EC" id="1.5.3.-" evidence="1"/>
<dbReference type="EMBL" id="CP000038">
    <property type="protein sequence ID" value="AAZ87805.1"/>
    <property type="molecule type" value="Genomic_DNA"/>
</dbReference>
<dbReference type="RefSeq" id="WP_000872818.1">
    <property type="nucleotide sequence ID" value="NC_007384.1"/>
</dbReference>
<dbReference type="SMR" id="Q3Z357"/>
<dbReference type="KEGG" id="ssn:SSON_1079"/>
<dbReference type="HOGENOM" id="CLU_007884_2_1_6"/>
<dbReference type="Proteomes" id="UP000002529">
    <property type="component" value="Chromosome"/>
</dbReference>
<dbReference type="GO" id="GO:0005829">
    <property type="term" value="C:cytosol"/>
    <property type="evidence" value="ECO:0007669"/>
    <property type="project" value="TreeGrafter"/>
</dbReference>
<dbReference type="GO" id="GO:0050660">
    <property type="term" value="F:flavin adenine dinucleotide binding"/>
    <property type="evidence" value="ECO:0007669"/>
    <property type="project" value="InterPro"/>
</dbReference>
<dbReference type="GO" id="GO:0050131">
    <property type="term" value="F:N-methyl-L-amino-acid oxidase activity"/>
    <property type="evidence" value="ECO:0007669"/>
    <property type="project" value="InterPro"/>
</dbReference>
<dbReference type="GO" id="GO:0008115">
    <property type="term" value="F:sarcosine oxidase activity"/>
    <property type="evidence" value="ECO:0007669"/>
    <property type="project" value="TreeGrafter"/>
</dbReference>
<dbReference type="Gene3D" id="3.30.9.10">
    <property type="entry name" value="D-Amino Acid Oxidase, subunit A, domain 2"/>
    <property type="match status" value="1"/>
</dbReference>
<dbReference type="Gene3D" id="3.50.50.60">
    <property type="entry name" value="FAD/NAD(P)-binding domain"/>
    <property type="match status" value="1"/>
</dbReference>
<dbReference type="HAMAP" id="MF_00515">
    <property type="entry name" value="MTOX"/>
    <property type="match status" value="1"/>
</dbReference>
<dbReference type="InterPro" id="IPR006076">
    <property type="entry name" value="FAD-dep_OxRdtase"/>
</dbReference>
<dbReference type="InterPro" id="IPR036188">
    <property type="entry name" value="FAD/NAD-bd_sf"/>
</dbReference>
<dbReference type="InterPro" id="IPR023493">
    <property type="entry name" value="Me_Trp_Oxase_MTOX"/>
</dbReference>
<dbReference type="InterPro" id="IPR045170">
    <property type="entry name" value="MTOX"/>
</dbReference>
<dbReference type="NCBIfam" id="NF008425">
    <property type="entry name" value="PRK11259.1"/>
    <property type="match status" value="1"/>
</dbReference>
<dbReference type="PANTHER" id="PTHR10961:SF7">
    <property type="entry name" value="FAD DEPENDENT OXIDOREDUCTASE DOMAIN-CONTAINING PROTEIN"/>
    <property type="match status" value="1"/>
</dbReference>
<dbReference type="PANTHER" id="PTHR10961">
    <property type="entry name" value="PEROXISOMAL SARCOSINE OXIDASE"/>
    <property type="match status" value="1"/>
</dbReference>
<dbReference type="Pfam" id="PF01266">
    <property type="entry name" value="DAO"/>
    <property type="match status" value="1"/>
</dbReference>
<dbReference type="SUPFAM" id="SSF54373">
    <property type="entry name" value="FAD-linked reductases, C-terminal domain"/>
    <property type="match status" value="1"/>
</dbReference>
<dbReference type="SUPFAM" id="SSF51905">
    <property type="entry name" value="FAD/NAD(P)-binding domain"/>
    <property type="match status" value="1"/>
</dbReference>
<name>MTOX_SHISS</name>
<sequence>MKYDLIIIGSGSVGAAAGYYATRAGLNVLMTDAHMPPHQHGSHHGDTRLIRHAYGEGEKYVPLVLRAQTLWDELSRHNEDDPIFVRSGVINLGPADSAFLANVAHSAEQWQLNVEKLDAQGIMARWPEIRVPDNYIGLFETDSGFLRSELAIKTWIQLAKEAGCAQLFNCPVTAIRHDDDGVTIETVDGEYQAKKAIVCAGTWVKDLLPEQPVQPVRKVFAWYQADGRYSVKNKFPAFTGELPNGDQYYGFPAENDALKIGKHNGGQVIHSADERVPFAEVVSDGSEAFPFLRNVLPGIGCCLYGAACTYDNSPDEDFIIDTLPGHDNTLLITGLSGHGFKFASVLGEIAADFAQDKKSDFDLTPFRLSRFQ</sequence>
<protein>
    <recommendedName>
        <fullName evidence="1">N-methyl-L-tryptophan oxidase</fullName>
        <shortName evidence="1">MTOX</shortName>
        <ecNumber evidence="1">1.5.3.-</ecNumber>
    </recommendedName>
</protein>
<evidence type="ECO:0000255" key="1">
    <source>
        <dbReference type="HAMAP-Rule" id="MF_00515"/>
    </source>
</evidence>
<proteinExistence type="inferred from homology"/>
<feature type="chain" id="PRO_0000259025" description="N-methyl-L-tryptophan oxidase">
    <location>
        <begin position="1"/>
        <end position="372"/>
    </location>
</feature>
<feature type="binding site" evidence="1">
    <location>
        <begin position="4"/>
        <end position="34"/>
    </location>
    <ligand>
        <name>FAD</name>
        <dbReference type="ChEBI" id="CHEBI:57692"/>
    </ligand>
</feature>
<feature type="modified residue" description="S-8alpha-FAD cysteine" evidence="1">
    <location>
        <position position="308"/>
    </location>
</feature>
<accession>Q3Z357</accession>